<feature type="transit peptide" description="Chloroplast" evidence="2">
    <location>
        <begin position="1"/>
        <end position="62"/>
    </location>
</feature>
<feature type="chain" id="PRO_0000225671" description="Prolycopene isomerase, chloroplastic">
    <location>
        <begin position="63"/>
        <end position="615"/>
    </location>
</feature>
<comment type="function">
    <text evidence="1">Carotene cis-trans-isomerase that converts 7,9,9'-tri-cis-neurosporene to 9'-cis-neurosporene and 7,9,9',7'-tetra-cis-lycopene (also known as prolycopene) into all-trans-lycopene. Isomerization requires redox-active components, suggesting that isomerization is achieved by a reversible redox reaction acting at specific double bonds. Isomerizes adjacent cis-double bonds at C7 and C9 pairwise into the trans-configuration, but is incapable of isomerizing single cis-double bonds at C9 and C9' (By similarity).</text>
</comment>
<comment type="catalytic activity">
    <reaction>
        <text>7,7',9,9'-tetra-cis-lycopene = all-trans-lycopene</text>
        <dbReference type="Rhea" id="RHEA:30971"/>
        <dbReference type="ChEBI" id="CHEBI:15948"/>
        <dbReference type="ChEBI" id="CHEBI:62466"/>
        <dbReference type="EC" id="5.2.1.13"/>
    </reaction>
</comment>
<comment type="cofactor">
    <cofactor evidence="1">
        <name>NAD(+)</name>
        <dbReference type="ChEBI" id="CHEBI:57540"/>
    </cofactor>
    <cofactor evidence="1">
        <name>NADP(+)</name>
        <dbReference type="ChEBI" id="CHEBI:58349"/>
    </cofactor>
    <cofactor evidence="1">
        <name>FAD</name>
        <dbReference type="ChEBI" id="CHEBI:57692"/>
    </cofactor>
</comment>
<comment type="pathway">
    <text>Carotenoid biosynthesis; lycopene biosynthesis.</text>
</comment>
<comment type="subcellular location">
    <subcellularLocation>
        <location evidence="1">Plastid</location>
        <location evidence="1">Chloroplast membrane</location>
        <topology evidence="1">Peripheral membrane protein</topology>
    </subcellularLocation>
</comment>
<comment type="similarity">
    <text evidence="3">Belongs to the carotenoid/retinoid oxidoreductase family. CrtISO subfamily.</text>
</comment>
<name>CRTSO_DAUCA</name>
<reference key="1">
    <citation type="submission" date="2005-09" db="EMBL/GenBank/DDBJ databases">
        <title>Carotenoid biosynthesis structural genes in carrot (Daucus carota L.): STS markers, molecular mapping, and sequencing.</title>
        <authorList>
            <person name="Just B.J."/>
            <person name="Santos C.A.F."/>
            <person name="Fonseca M.E.N."/>
            <person name="Oloizia B.B."/>
            <person name="Simon P.W."/>
        </authorList>
    </citation>
    <scope>NUCLEOTIDE SEQUENCE [MRNA]</scope>
    <source>
        <strain>cv. Sativum</strain>
    </source>
</reference>
<accession>Q2VEX9</accession>
<sequence>MSTSIFETPLPRSDLFLCSNSLLSQNYKLFDNSRSFGLKSLRPRCQKDGLLYPKPLNFGFCRVSRRKRKPNFVLNSVLSVDKELESDETVGLGRSREYDAIVIGSGIGGLVAATQLAVKGAKVLVLEKYLIPGGSSGYYERDGFTFDVGSSVMFGFSDKGNLNLITQALAAVGCKMEVIPDPSTVHFHLPSNLSVLVHREYNEFFSELTSKFPHEKEGIFKFYGECWKIFNALNSLELKSLEEPIYLFGQFFKKPMECLTLAYYLPQNAGDIARKFIKDPEVLSFIDAECFIVSTVNALKTPMINASMVLCDRHYGGINYPVGGVGGIAKSLAKGLVDQGSEIQYKANVKSIIVENGKAVGVRLANGNEIFAKNIISNATRWDTFGKLLKQDELPKEEENFQKLYIKAPSFLSIHLGVKSDVLPPDTDCHHFVLEDDWSNLEVPYGSIFLSIPTVLDSSLAPEGNHILHIFTTSSIEDWQGMSQKDYEKKKELVADEIISRLEKKLFPGLQSSIVLKEVGTPKTHRRYLARDSGTYGPMPQGTPKGLLGMPFNTTAIDGLYCVGDSCFPGQGVIAVAFSGVMCAHRVAADLGLEQKSPILDAALLRLLGWFRTLA</sequence>
<organism>
    <name type="scientific">Daucus carota</name>
    <name type="common">Wild carrot</name>
    <dbReference type="NCBI Taxonomy" id="4039"/>
    <lineage>
        <taxon>Eukaryota</taxon>
        <taxon>Viridiplantae</taxon>
        <taxon>Streptophyta</taxon>
        <taxon>Embryophyta</taxon>
        <taxon>Tracheophyta</taxon>
        <taxon>Spermatophyta</taxon>
        <taxon>Magnoliopsida</taxon>
        <taxon>eudicotyledons</taxon>
        <taxon>Gunneridae</taxon>
        <taxon>Pentapetalae</taxon>
        <taxon>asterids</taxon>
        <taxon>campanulids</taxon>
        <taxon>Apiales</taxon>
        <taxon>Apiaceae</taxon>
        <taxon>Apioideae</taxon>
        <taxon>Scandiceae</taxon>
        <taxon>Daucinae</taxon>
        <taxon>Daucus</taxon>
        <taxon>Daucus sect. Daucus</taxon>
    </lineage>
</organism>
<evidence type="ECO:0000250" key="1"/>
<evidence type="ECO:0000255" key="2"/>
<evidence type="ECO:0000305" key="3"/>
<gene>
    <name type="primary">CRTISO</name>
</gene>
<dbReference type="EC" id="5.2.1.13"/>
<dbReference type="EMBL" id="DQ192188">
    <property type="protein sequence ID" value="ABB52069.1"/>
    <property type="molecule type" value="mRNA"/>
</dbReference>
<dbReference type="RefSeq" id="NP_001316099.1">
    <property type="nucleotide sequence ID" value="NM_001329170.1"/>
</dbReference>
<dbReference type="SMR" id="Q2VEX9"/>
<dbReference type="GeneID" id="108219304"/>
<dbReference type="KEGG" id="dcr:108219304"/>
<dbReference type="UniPathway" id="UPA00803"/>
<dbReference type="GO" id="GO:0031969">
    <property type="term" value="C:chloroplast membrane"/>
    <property type="evidence" value="ECO:0007669"/>
    <property type="project" value="UniProtKB-SubCell"/>
</dbReference>
<dbReference type="GO" id="GO:0046608">
    <property type="term" value="F:carotenoid isomerase activity"/>
    <property type="evidence" value="ECO:0007669"/>
    <property type="project" value="InterPro"/>
</dbReference>
<dbReference type="GO" id="GO:0016491">
    <property type="term" value="F:oxidoreductase activity"/>
    <property type="evidence" value="ECO:0007669"/>
    <property type="project" value="InterPro"/>
</dbReference>
<dbReference type="GO" id="GO:0016117">
    <property type="term" value="P:carotenoid biosynthetic process"/>
    <property type="evidence" value="ECO:0007669"/>
    <property type="project" value="UniProtKB-KW"/>
</dbReference>
<dbReference type="Gene3D" id="3.90.660.50">
    <property type="match status" value="1"/>
</dbReference>
<dbReference type="Gene3D" id="3.50.50.60">
    <property type="entry name" value="FAD/NAD(P)-binding domain"/>
    <property type="match status" value="1"/>
</dbReference>
<dbReference type="InterPro" id="IPR002937">
    <property type="entry name" value="Amino_oxidase"/>
</dbReference>
<dbReference type="InterPro" id="IPR014101">
    <property type="entry name" value="CrtISO"/>
</dbReference>
<dbReference type="InterPro" id="IPR045892">
    <property type="entry name" value="CrtISO-like"/>
</dbReference>
<dbReference type="InterPro" id="IPR036188">
    <property type="entry name" value="FAD/NAD-bd_sf"/>
</dbReference>
<dbReference type="NCBIfam" id="TIGR02730">
    <property type="entry name" value="carot_isom"/>
    <property type="match status" value="1"/>
</dbReference>
<dbReference type="PANTHER" id="PTHR46313">
    <property type="match status" value="1"/>
</dbReference>
<dbReference type="PANTHER" id="PTHR46313:SF3">
    <property type="entry name" value="PROLYCOPENE ISOMERASE, CHLOROPLASTIC"/>
    <property type="match status" value="1"/>
</dbReference>
<dbReference type="Pfam" id="PF01593">
    <property type="entry name" value="Amino_oxidase"/>
    <property type="match status" value="1"/>
</dbReference>
<dbReference type="SUPFAM" id="SSF51905">
    <property type="entry name" value="FAD/NAD(P)-binding domain"/>
    <property type="match status" value="1"/>
</dbReference>
<protein>
    <recommendedName>
        <fullName>Prolycopene isomerase, chloroplastic</fullName>
        <shortName>CrtISO</shortName>
        <ecNumber>5.2.1.13</ecNumber>
    </recommendedName>
    <alternativeName>
        <fullName>Carotenoid isomerase</fullName>
    </alternativeName>
</protein>
<proteinExistence type="evidence at transcript level"/>
<keyword id="KW-0125">Carotenoid biosynthesis</keyword>
<keyword id="KW-0150">Chloroplast</keyword>
<keyword id="KW-0274">FAD</keyword>
<keyword id="KW-0285">Flavoprotein</keyword>
<keyword id="KW-0413">Isomerase</keyword>
<keyword id="KW-0472">Membrane</keyword>
<keyword id="KW-0520">NAD</keyword>
<keyword id="KW-0521">NADP</keyword>
<keyword id="KW-0934">Plastid</keyword>
<keyword id="KW-0809">Transit peptide</keyword>